<proteinExistence type="inferred from homology"/>
<gene>
    <name evidence="1" type="primary">gatA</name>
    <name type="ordered locus">CC_2437</name>
</gene>
<name>GATA_CAUVC</name>
<sequence length="489" mass="51877">MSLTNLTLKAAIDGLAAREFTSVELTRAHIEAIEAARGLNAYILETPDKAIDMAAKSDARRALGEAGPLEGAPLGVKDLFCTNGVRTTACSKILENFVPTYESTVTSQLWRDGAVMLGKLNLDQFAMGSSNETSYFGPVTNPWRAQGSTKALTPGGSSGGSAAAVAADLCLGATATDTGGSIRQPAAFTGTVGIKPTYGRCSRWGVVAFASSLDQAGPIAKTVEDAALLLTSMSGHDPKDSTSLDIPVPDFTQFVGKSVKGLKIGIPKEYRVDNMPAEIEKLWQDGIAWLKEAGCEIVDISLPHTKYALPAYYIVAPAEASSNLARYDGMRYGLREEGANLTEIYENTRASGFGDEVKRRILIGTYVLSAGYYDAYYLKALKVRRRIAEDFDNAWTQCDAILTPTAPSAAFGLGENSNDPIAMYLNDVFTVTTNLAGLPGLSLPAGLDANGLPLGLQIIGKPLDEATVFSVAGAVEKAAGFTAKAEKWW</sequence>
<organism>
    <name type="scientific">Caulobacter vibrioides (strain ATCC 19089 / CIP 103742 / CB 15)</name>
    <name type="common">Caulobacter crescentus</name>
    <dbReference type="NCBI Taxonomy" id="190650"/>
    <lineage>
        <taxon>Bacteria</taxon>
        <taxon>Pseudomonadati</taxon>
        <taxon>Pseudomonadota</taxon>
        <taxon>Alphaproteobacteria</taxon>
        <taxon>Caulobacterales</taxon>
        <taxon>Caulobacteraceae</taxon>
        <taxon>Caulobacter</taxon>
    </lineage>
</organism>
<feature type="chain" id="PRO_0000105149" description="Glutamyl-tRNA(Gln) amidotransferase subunit A">
    <location>
        <begin position="1"/>
        <end position="489"/>
    </location>
</feature>
<feature type="active site" description="Charge relay system" evidence="1">
    <location>
        <position position="77"/>
    </location>
</feature>
<feature type="active site" description="Charge relay system" evidence="1">
    <location>
        <position position="157"/>
    </location>
</feature>
<feature type="active site" description="Acyl-ester intermediate" evidence="1">
    <location>
        <position position="181"/>
    </location>
</feature>
<protein>
    <recommendedName>
        <fullName evidence="1">Glutamyl-tRNA(Gln) amidotransferase subunit A</fullName>
        <shortName evidence="1">Glu-ADT subunit A</shortName>
        <ecNumber evidence="1">6.3.5.7</ecNumber>
    </recommendedName>
</protein>
<keyword id="KW-0067">ATP-binding</keyword>
<keyword id="KW-0436">Ligase</keyword>
<keyword id="KW-0547">Nucleotide-binding</keyword>
<keyword id="KW-0648">Protein biosynthesis</keyword>
<keyword id="KW-1185">Reference proteome</keyword>
<dbReference type="EC" id="6.3.5.7" evidence="1"/>
<dbReference type="EMBL" id="AE005673">
    <property type="protein sequence ID" value="AAK24408.1"/>
    <property type="molecule type" value="Genomic_DNA"/>
</dbReference>
<dbReference type="PIR" id="D87551">
    <property type="entry name" value="D87551"/>
</dbReference>
<dbReference type="RefSeq" id="NP_421240.1">
    <property type="nucleotide sequence ID" value="NC_002696.2"/>
</dbReference>
<dbReference type="RefSeq" id="WP_010920295.1">
    <property type="nucleotide sequence ID" value="NC_002696.2"/>
</dbReference>
<dbReference type="SMR" id="Q9A5L0"/>
<dbReference type="STRING" id="190650.CC_2437"/>
<dbReference type="EnsemblBacteria" id="AAK24408">
    <property type="protein sequence ID" value="AAK24408"/>
    <property type="gene ID" value="CC_2437"/>
</dbReference>
<dbReference type="KEGG" id="ccr:CC_2437"/>
<dbReference type="PATRIC" id="fig|190650.5.peg.2454"/>
<dbReference type="eggNOG" id="COG0154">
    <property type="taxonomic scope" value="Bacteria"/>
</dbReference>
<dbReference type="HOGENOM" id="CLU_009600_0_3_5"/>
<dbReference type="BioCyc" id="CAULO:CC2437-MONOMER"/>
<dbReference type="Proteomes" id="UP000001816">
    <property type="component" value="Chromosome"/>
</dbReference>
<dbReference type="GO" id="GO:0030956">
    <property type="term" value="C:glutamyl-tRNA(Gln) amidotransferase complex"/>
    <property type="evidence" value="ECO:0007669"/>
    <property type="project" value="InterPro"/>
</dbReference>
<dbReference type="GO" id="GO:0005524">
    <property type="term" value="F:ATP binding"/>
    <property type="evidence" value="ECO:0007669"/>
    <property type="project" value="UniProtKB-KW"/>
</dbReference>
<dbReference type="GO" id="GO:0050567">
    <property type="term" value="F:glutaminyl-tRNA synthase (glutamine-hydrolyzing) activity"/>
    <property type="evidence" value="ECO:0007669"/>
    <property type="project" value="UniProtKB-UniRule"/>
</dbReference>
<dbReference type="GO" id="GO:0006412">
    <property type="term" value="P:translation"/>
    <property type="evidence" value="ECO:0007669"/>
    <property type="project" value="UniProtKB-UniRule"/>
</dbReference>
<dbReference type="Gene3D" id="3.90.1300.10">
    <property type="entry name" value="Amidase signature (AS) domain"/>
    <property type="match status" value="1"/>
</dbReference>
<dbReference type="HAMAP" id="MF_00120">
    <property type="entry name" value="GatA"/>
    <property type="match status" value="1"/>
</dbReference>
<dbReference type="InterPro" id="IPR000120">
    <property type="entry name" value="Amidase"/>
</dbReference>
<dbReference type="InterPro" id="IPR020556">
    <property type="entry name" value="Amidase_CS"/>
</dbReference>
<dbReference type="InterPro" id="IPR023631">
    <property type="entry name" value="Amidase_dom"/>
</dbReference>
<dbReference type="InterPro" id="IPR036928">
    <property type="entry name" value="AS_sf"/>
</dbReference>
<dbReference type="InterPro" id="IPR004412">
    <property type="entry name" value="GatA"/>
</dbReference>
<dbReference type="NCBIfam" id="TIGR00132">
    <property type="entry name" value="gatA"/>
    <property type="match status" value="1"/>
</dbReference>
<dbReference type="PANTHER" id="PTHR11895:SF151">
    <property type="entry name" value="GLUTAMYL-TRNA(GLN) AMIDOTRANSFERASE SUBUNIT A"/>
    <property type="match status" value="1"/>
</dbReference>
<dbReference type="PANTHER" id="PTHR11895">
    <property type="entry name" value="TRANSAMIDASE"/>
    <property type="match status" value="1"/>
</dbReference>
<dbReference type="Pfam" id="PF01425">
    <property type="entry name" value="Amidase"/>
    <property type="match status" value="1"/>
</dbReference>
<dbReference type="SUPFAM" id="SSF75304">
    <property type="entry name" value="Amidase signature (AS) enzymes"/>
    <property type="match status" value="1"/>
</dbReference>
<dbReference type="PROSITE" id="PS00571">
    <property type="entry name" value="AMIDASES"/>
    <property type="match status" value="1"/>
</dbReference>
<reference key="1">
    <citation type="journal article" date="2001" name="Proc. Natl. Acad. Sci. U.S.A.">
        <title>Complete genome sequence of Caulobacter crescentus.</title>
        <authorList>
            <person name="Nierman W.C."/>
            <person name="Feldblyum T.V."/>
            <person name="Laub M.T."/>
            <person name="Paulsen I.T."/>
            <person name="Nelson K.E."/>
            <person name="Eisen J.A."/>
            <person name="Heidelberg J.F."/>
            <person name="Alley M.R.K."/>
            <person name="Ohta N."/>
            <person name="Maddock J.R."/>
            <person name="Potocka I."/>
            <person name="Nelson W.C."/>
            <person name="Newton A."/>
            <person name="Stephens C."/>
            <person name="Phadke N.D."/>
            <person name="Ely B."/>
            <person name="DeBoy R.T."/>
            <person name="Dodson R.J."/>
            <person name="Durkin A.S."/>
            <person name="Gwinn M.L."/>
            <person name="Haft D.H."/>
            <person name="Kolonay J.F."/>
            <person name="Smit J."/>
            <person name="Craven M.B."/>
            <person name="Khouri H.M."/>
            <person name="Shetty J."/>
            <person name="Berry K.J."/>
            <person name="Utterback T.R."/>
            <person name="Tran K."/>
            <person name="Wolf A.M."/>
            <person name="Vamathevan J.J."/>
            <person name="Ermolaeva M.D."/>
            <person name="White O."/>
            <person name="Salzberg S.L."/>
            <person name="Venter J.C."/>
            <person name="Shapiro L."/>
            <person name="Fraser C.M."/>
        </authorList>
    </citation>
    <scope>NUCLEOTIDE SEQUENCE [LARGE SCALE GENOMIC DNA]</scope>
    <source>
        <strain>ATCC 19089 / CIP 103742 / CB 15</strain>
    </source>
</reference>
<evidence type="ECO:0000255" key="1">
    <source>
        <dbReference type="HAMAP-Rule" id="MF_00120"/>
    </source>
</evidence>
<accession>Q9A5L0</accession>
<comment type="function">
    <text evidence="1">Allows the formation of correctly charged Gln-tRNA(Gln) through the transamidation of misacylated Glu-tRNA(Gln) in organisms which lack glutaminyl-tRNA synthetase. The reaction takes place in the presence of glutamine and ATP through an activated gamma-phospho-Glu-tRNA(Gln).</text>
</comment>
<comment type="catalytic activity">
    <reaction evidence="1">
        <text>L-glutamyl-tRNA(Gln) + L-glutamine + ATP + H2O = L-glutaminyl-tRNA(Gln) + L-glutamate + ADP + phosphate + H(+)</text>
        <dbReference type="Rhea" id="RHEA:17521"/>
        <dbReference type="Rhea" id="RHEA-COMP:9681"/>
        <dbReference type="Rhea" id="RHEA-COMP:9684"/>
        <dbReference type="ChEBI" id="CHEBI:15377"/>
        <dbReference type="ChEBI" id="CHEBI:15378"/>
        <dbReference type="ChEBI" id="CHEBI:29985"/>
        <dbReference type="ChEBI" id="CHEBI:30616"/>
        <dbReference type="ChEBI" id="CHEBI:43474"/>
        <dbReference type="ChEBI" id="CHEBI:58359"/>
        <dbReference type="ChEBI" id="CHEBI:78520"/>
        <dbReference type="ChEBI" id="CHEBI:78521"/>
        <dbReference type="ChEBI" id="CHEBI:456216"/>
        <dbReference type="EC" id="6.3.5.7"/>
    </reaction>
</comment>
<comment type="subunit">
    <text evidence="1">Heterotrimer of A, B and C subunits.</text>
</comment>
<comment type="similarity">
    <text evidence="1">Belongs to the amidase family. GatA subfamily.</text>
</comment>